<organism>
    <name type="scientific">Saccharomyces cerevisiae (strain ATCC 204508 / S288c)</name>
    <name type="common">Baker's yeast</name>
    <dbReference type="NCBI Taxonomy" id="559292"/>
    <lineage>
        <taxon>Eukaryota</taxon>
        <taxon>Fungi</taxon>
        <taxon>Dikarya</taxon>
        <taxon>Ascomycota</taxon>
        <taxon>Saccharomycotina</taxon>
        <taxon>Saccharomycetes</taxon>
        <taxon>Saccharomycetales</taxon>
        <taxon>Saccharomycetaceae</taxon>
        <taxon>Saccharomyces</taxon>
    </lineage>
</organism>
<protein>
    <recommendedName>
        <fullName>Transposon Ty1-LR2 Gag-Pol polyprotein</fullName>
    </recommendedName>
    <alternativeName>
        <fullName>Gag-Pol-p199</fullName>
    </alternativeName>
    <alternativeName>
        <fullName>TY1A-TY1B</fullName>
    </alternativeName>
    <alternativeName>
        <fullName>Transposon Ty1 TYA-TYB polyprotein</fullName>
    </alternativeName>
    <alternativeName>
        <fullName>p190</fullName>
    </alternativeName>
    <component>
        <recommendedName>
            <fullName>Capsid protein</fullName>
            <shortName>CA</shortName>
        </recommendedName>
        <alternativeName>
            <fullName>Gag-p45</fullName>
        </alternativeName>
        <alternativeName>
            <fullName>p54</fullName>
        </alternativeName>
    </component>
    <component>
        <recommendedName>
            <fullName>Ty1 protease</fullName>
            <shortName>PR</shortName>
            <ecNumber>3.4.23.-</ecNumber>
        </recommendedName>
        <alternativeName>
            <fullName>Pol-p20</fullName>
        </alternativeName>
        <alternativeName>
            <fullName>p23</fullName>
        </alternativeName>
    </component>
    <component>
        <recommendedName>
            <fullName>Integrase</fullName>
            <shortName>IN</shortName>
        </recommendedName>
        <alternativeName>
            <fullName>Pol-p71</fullName>
        </alternativeName>
        <alternativeName>
            <fullName>p84</fullName>
        </alternativeName>
        <alternativeName>
            <fullName>p90</fullName>
        </alternativeName>
    </component>
    <component>
        <recommendedName>
            <fullName>Reverse transcriptase/ribonuclease H</fullName>
            <shortName>RT</shortName>
            <ecNumber>2.7.7.49</ecNumber>
            <ecNumber>2.7.7.7</ecNumber>
            <ecNumber>3.1.26.4</ecNumber>
        </recommendedName>
        <alternativeName>
            <fullName>Pol-p63</fullName>
        </alternativeName>
        <alternativeName>
            <fullName>p60</fullName>
        </alternativeName>
    </component>
</protein>
<name>YL12B_YEAST</name>
<reference key="1">
    <citation type="journal article" date="1997" name="Nature">
        <title>The nucleotide sequence of Saccharomyces cerevisiae chromosome XII.</title>
        <authorList>
            <person name="Johnston M."/>
            <person name="Hillier L.W."/>
            <person name="Riles L."/>
            <person name="Albermann K."/>
            <person name="Andre B."/>
            <person name="Ansorge W."/>
            <person name="Benes V."/>
            <person name="Brueckner M."/>
            <person name="Delius H."/>
            <person name="Dubois E."/>
            <person name="Duesterhoeft A."/>
            <person name="Entian K.-D."/>
            <person name="Floeth M."/>
            <person name="Goffeau A."/>
            <person name="Hebling U."/>
            <person name="Heumann K."/>
            <person name="Heuss-Neitzel D."/>
            <person name="Hilbert H."/>
            <person name="Hilger F."/>
            <person name="Kleine K."/>
            <person name="Koetter P."/>
            <person name="Louis E.J."/>
            <person name="Messenguy F."/>
            <person name="Mewes H.-W."/>
            <person name="Miosga T."/>
            <person name="Moestl D."/>
            <person name="Mueller-Auer S."/>
            <person name="Nentwich U."/>
            <person name="Obermaier B."/>
            <person name="Piravandi E."/>
            <person name="Pohl T.M."/>
            <person name="Portetelle D."/>
            <person name="Purnelle B."/>
            <person name="Rechmann S."/>
            <person name="Rieger M."/>
            <person name="Rinke M."/>
            <person name="Rose M."/>
            <person name="Scharfe M."/>
            <person name="Scherens B."/>
            <person name="Scholler P."/>
            <person name="Schwager C."/>
            <person name="Schwarz S."/>
            <person name="Underwood A.P."/>
            <person name="Urrestarazu L.A."/>
            <person name="Vandenbol M."/>
            <person name="Verhasselt P."/>
            <person name="Vierendeels F."/>
            <person name="Voet M."/>
            <person name="Volckaert G."/>
            <person name="Voss H."/>
            <person name="Wambutt R."/>
            <person name="Wedler E."/>
            <person name="Wedler H."/>
            <person name="Zimmermann F.K."/>
            <person name="Zollner A."/>
            <person name="Hani J."/>
            <person name="Hoheisel J.D."/>
        </authorList>
    </citation>
    <scope>NUCLEOTIDE SEQUENCE [LARGE SCALE GENOMIC DNA]</scope>
    <source>
        <strain>ATCC 204508 / S288c</strain>
    </source>
</reference>
<reference key="2">
    <citation type="journal article" date="2014" name="G3 (Bethesda)">
        <title>The reference genome sequence of Saccharomyces cerevisiae: Then and now.</title>
        <authorList>
            <person name="Engel S.R."/>
            <person name="Dietrich F.S."/>
            <person name="Fisk D.G."/>
            <person name="Binkley G."/>
            <person name="Balakrishnan R."/>
            <person name="Costanzo M.C."/>
            <person name="Dwight S.S."/>
            <person name="Hitz B.C."/>
            <person name="Karra K."/>
            <person name="Nash R.S."/>
            <person name="Weng S."/>
            <person name="Wong E.D."/>
            <person name="Lloyd P."/>
            <person name="Skrzypek M.S."/>
            <person name="Miyasato S.R."/>
            <person name="Simison M."/>
            <person name="Cherry J.M."/>
        </authorList>
    </citation>
    <scope>GENOME REANNOTATION</scope>
    <source>
        <strain>ATCC 204508 / S288c</strain>
    </source>
</reference>
<reference key="3">
    <citation type="journal article" date="1998" name="Genome Res.">
        <title>Transposable elements and genome organization: a comprehensive survey of retrotransposons revealed by the complete Saccharomyces cerevisiae genome sequence.</title>
        <authorList>
            <person name="Kim J.M."/>
            <person name="Vanguri S."/>
            <person name="Boeke J.D."/>
            <person name="Gabriel A."/>
            <person name="Voytas D.F."/>
        </authorList>
    </citation>
    <scope>NOMENCLATURE</scope>
</reference>
<reference key="4">
    <citation type="journal article" date="2005" name="Cytogenet. Genome Res.">
        <title>Happy together: the life and times of Ty retrotransposons and their hosts.</title>
        <authorList>
            <person name="Lesage P."/>
            <person name="Todeschini A.L."/>
        </authorList>
    </citation>
    <scope>REVIEW</scope>
</reference>
<reference key="5">
    <citation type="journal article" date="2005" name="Cytogenet. Genome Res.">
        <title>Reverse transcriptase and integrase of the Saccharomyces cerevisiae Ty1 element.</title>
        <authorList>
            <person name="Wilhelm F.-X."/>
            <person name="Wilhelm M."/>
            <person name="Gabriel A."/>
        </authorList>
    </citation>
    <scope>REVIEW</scope>
    <scope>DOMAINS</scope>
</reference>
<comment type="function">
    <text evidence="1">Capsid protein (CA) is the structural component of the virus-like particle (VLP), forming the shell that encapsulates the retrotransposons dimeric RNA genome. The particles are assembled from trimer-clustered units and there are holes in the capsid shells that allow for the diffusion of macromolecules. CA also has nucleocapsid-like chaperone activity, promoting primer tRNA(i)-Met annealing to the multipartite primer-binding site (PBS), dimerization of Ty1 RNA and initiation of reverse transcription (By similarity).</text>
</comment>
<comment type="function">
    <text evidence="1">The aspartyl protease (PR) mediates the proteolytic cleavages of the Gag and Gag-Pol polyproteins after assembly of the VLP.</text>
</comment>
<comment type="function">
    <text evidence="1">Reverse transcriptase/ribonuclease H (RT) is a multifunctional enzyme that catalyzes the conversion of the retro-elements RNA genome into dsDNA within the VLP. The enzyme displays a DNA polymerase activity that can copy either DNA or RNA templates, and a ribonuclease H (RNase H) activity that cleaves the RNA strand of RNA-DNA heteroduplexes during plus-strand synthesis and hydrolyzes RNA primers. The conversion leads to a linear dsDNA copy of the retrotransposon that includes long terminal repeats (LTRs) at both ends (By similarity).</text>
</comment>
<comment type="function">
    <text evidence="1">Integrase (IN) targets the VLP to the nucleus, where a subparticle preintegration complex (PIC) containing at least integrase and the newly synthesized dsDNA copy of the retrotransposon must transit the nuclear membrane. Once in the nucleus, integrase performs the integration of the dsDNA into the host genome (By similarity).</text>
</comment>
<comment type="catalytic activity">
    <reaction>
        <text>DNA(n) + a 2'-deoxyribonucleoside 5'-triphosphate = DNA(n+1) + diphosphate</text>
        <dbReference type="Rhea" id="RHEA:22508"/>
        <dbReference type="Rhea" id="RHEA-COMP:17339"/>
        <dbReference type="Rhea" id="RHEA-COMP:17340"/>
        <dbReference type="ChEBI" id="CHEBI:33019"/>
        <dbReference type="ChEBI" id="CHEBI:61560"/>
        <dbReference type="ChEBI" id="CHEBI:173112"/>
        <dbReference type="EC" id="2.7.7.49"/>
    </reaction>
</comment>
<comment type="catalytic activity">
    <reaction>
        <text>DNA(n) + a 2'-deoxyribonucleoside 5'-triphosphate = DNA(n+1) + diphosphate</text>
        <dbReference type="Rhea" id="RHEA:22508"/>
        <dbReference type="Rhea" id="RHEA-COMP:17339"/>
        <dbReference type="Rhea" id="RHEA-COMP:17340"/>
        <dbReference type="ChEBI" id="CHEBI:33019"/>
        <dbReference type="ChEBI" id="CHEBI:61560"/>
        <dbReference type="ChEBI" id="CHEBI:173112"/>
        <dbReference type="EC" id="2.7.7.7"/>
    </reaction>
</comment>
<comment type="catalytic activity">
    <reaction>
        <text>Endonucleolytic cleavage to 5'-phosphomonoester.</text>
        <dbReference type="EC" id="3.1.26.4"/>
    </reaction>
</comment>
<comment type="subunit">
    <text evidence="1">The capsid protein forms a homotrimer, from which the VLPs are assembled. The protease is a homodimer, whose active site consists of two apposed aspartic acid residues (By similarity).</text>
</comment>
<comment type="subcellular location">
    <subcellularLocation>
        <location>Cytoplasm</location>
    </subcellularLocation>
    <subcellularLocation>
        <location evidence="1">Nucleus</location>
    </subcellularLocation>
</comment>
<comment type="alternative products">
    <event type="ribosomal frameshifting"/>
    <isoform>
        <id>P0C2I5-1</id>
        <name>Transposon Ty1-LR2 Gag-Pol polyprotein</name>
        <sequence type="displayed"/>
    </isoform>
    <isoform>
        <id>P0CX72-1</id>
        <name>Transposon Ty1-LR2 Gag polyprotein</name>
        <sequence type="external"/>
    </isoform>
    <text evidence="1">The Gag-Pol polyprotein is generated by a +1 ribosomal frameshift. The ratio of Gag:Gag-Pol varies between 20:1 and 5:1 (By similarity).</text>
</comment>
<comment type="domain">
    <text evidence="1">The C-terminal RNA-binding region of CA is sufficient for all its nucleocapsid-like chaperone activities.</text>
</comment>
<comment type="domain">
    <text evidence="1">Integrase core domain contains the D-x(n)-D-x(35)-E motif, named for the phylogenetically conserved glutamic acid and aspartic acid residues and the invariant 35 amino acid spacing between the second and third acidic residues. Each acidic residue of the D,D(35)E motif is independently essential for the 3'-processing and strand transfer activities of purified integrase protein (By similarity).</text>
</comment>
<comment type="PTM">
    <text evidence="1">Initially, virus-like particles (VLPs) are composed of the structural unprocessed proteins Gag and Gag-Pol, and also contain the host initiator methionine tRNA (tRNA(i)-Met) which serves as a primer for minus-strand DNA synthesis, and a dimer of genomic Ty RNA. Processing of the polyproteins occurs within the particle and proceeds by an ordered pathway, called maturation. First, the protease (PR) is released by autocatalytic cleavage of the Gag-Pol polyprotein yielding capsid protein p45 and a Pol-p154 precursor protein. This cleavage is a prerequisite for subsequent processing of Pol-p154 at the remaining sites to release the mature structural and catalytic proteins. Maturation takes place prior to the RT reaction and is required to produce transposition-competent VLPs (By similarity).</text>
</comment>
<comment type="miscellaneous">
    <text>Retrotransposons are mobile genetic entities that are able to replicate via an RNA intermediate and a reverse transcription step. In contrast to retroviruses, retrotransposons are non-infectious, lack an envelope and remain intracellular. Ty1 retrotransposons belong to the copia elements (pseudoviridae).</text>
</comment>
<comment type="miscellaneous">
    <molecule>Isoform Transposon Ty1-LR2 Gag-Pol polyprotein</molecule>
    <text>Produced by +1 ribosomal frameshifting between codon Leu-435 and Gly-436 of the YLR157C-A ORF.</text>
</comment>
<dbReference type="EC" id="3.4.23.-"/>
<dbReference type="EC" id="2.7.7.49"/>
<dbReference type="EC" id="2.7.7.7"/>
<dbReference type="EC" id="3.1.26.4"/>
<dbReference type="EMBL" id="U51921">
    <property type="status" value="NOT_ANNOTATED_CDS"/>
    <property type="molecule type" value="Genomic_DNA"/>
</dbReference>
<dbReference type="EMBL" id="BK006945">
    <property type="protein sequence ID" value="DAA09474.1"/>
    <property type="molecule type" value="Genomic_DNA"/>
</dbReference>
<dbReference type="PIR" id="S69960">
    <property type="entry name" value="S69960"/>
</dbReference>
<dbReference type="RefSeq" id="NP_058169.1">
    <molecule id="P0C2I5-1"/>
    <property type="nucleotide sequence ID" value="NM_001184406.2"/>
</dbReference>
<dbReference type="SMR" id="P0C2I5"/>
<dbReference type="BioGRID" id="31429">
    <property type="interactions" value="8"/>
</dbReference>
<dbReference type="FunCoup" id="P0C2I5">
    <property type="interactions" value="309"/>
</dbReference>
<dbReference type="IntAct" id="P0C2I5">
    <property type="interactions" value="10"/>
</dbReference>
<dbReference type="GlyGen" id="P0C2I5">
    <property type="glycosylation" value="3 sites"/>
</dbReference>
<dbReference type="PaxDb" id="4932-YLR157C-B"/>
<dbReference type="PeptideAtlas" id="P0C2I5"/>
<dbReference type="GeneID" id="850853"/>
<dbReference type="KEGG" id="sce:YLR157C-B"/>
<dbReference type="AGR" id="SGD:S000007374"/>
<dbReference type="SGD" id="S000007374">
    <property type="gene designation" value="YLR157C-B"/>
</dbReference>
<dbReference type="VEuPathDB" id="FungiDB:YLR157C-B"/>
<dbReference type="eggNOG" id="KOG0017">
    <property type="taxonomic scope" value="Eukaryota"/>
</dbReference>
<dbReference type="HOGENOM" id="CLU_244151_0_0_1"/>
<dbReference type="InParanoid" id="P0C2I5"/>
<dbReference type="OrthoDB" id="5423336at2759"/>
<dbReference type="BioGRID-ORCS" id="850853">
    <property type="hits" value="0 hits in 10 CRISPR screens"/>
</dbReference>
<dbReference type="Proteomes" id="UP000002311">
    <property type="component" value="Chromosome XII"/>
</dbReference>
<dbReference type="RNAct" id="P0C2I5">
    <property type="molecule type" value="protein"/>
</dbReference>
<dbReference type="GO" id="GO:0005737">
    <property type="term" value="C:cytoplasm"/>
    <property type="evidence" value="ECO:0007669"/>
    <property type="project" value="UniProtKB-SubCell"/>
</dbReference>
<dbReference type="GO" id="GO:0005634">
    <property type="term" value="C:nucleus"/>
    <property type="evidence" value="ECO:0000314"/>
    <property type="project" value="SGD"/>
</dbReference>
<dbReference type="GO" id="GO:0004190">
    <property type="term" value="F:aspartic-type endopeptidase activity"/>
    <property type="evidence" value="ECO:0007669"/>
    <property type="project" value="UniProtKB-KW"/>
</dbReference>
<dbReference type="GO" id="GO:0005524">
    <property type="term" value="F:ATP binding"/>
    <property type="evidence" value="ECO:0007669"/>
    <property type="project" value="UniProtKB-KW"/>
</dbReference>
<dbReference type="GO" id="GO:0003677">
    <property type="term" value="F:DNA binding"/>
    <property type="evidence" value="ECO:0007669"/>
    <property type="project" value="UniProtKB-KW"/>
</dbReference>
<dbReference type="GO" id="GO:0003887">
    <property type="term" value="F:DNA-directed DNA polymerase activity"/>
    <property type="evidence" value="ECO:0007669"/>
    <property type="project" value="UniProtKB-KW"/>
</dbReference>
<dbReference type="GO" id="GO:0003723">
    <property type="term" value="F:RNA binding"/>
    <property type="evidence" value="ECO:0007669"/>
    <property type="project" value="UniProtKB-KW"/>
</dbReference>
<dbReference type="GO" id="GO:0003964">
    <property type="term" value="F:RNA-directed DNA polymerase activity"/>
    <property type="evidence" value="ECO:0007669"/>
    <property type="project" value="UniProtKB-KW"/>
</dbReference>
<dbReference type="GO" id="GO:0004523">
    <property type="term" value="F:RNA-DNA hybrid ribonuclease activity"/>
    <property type="evidence" value="ECO:0007669"/>
    <property type="project" value="UniProtKB-EC"/>
</dbReference>
<dbReference type="GO" id="GO:0008270">
    <property type="term" value="F:zinc ion binding"/>
    <property type="evidence" value="ECO:0007669"/>
    <property type="project" value="UniProtKB-KW"/>
</dbReference>
<dbReference type="GO" id="GO:0015074">
    <property type="term" value="P:DNA integration"/>
    <property type="evidence" value="ECO:0007669"/>
    <property type="project" value="UniProtKB-KW"/>
</dbReference>
<dbReference type="GO" id="GO:0006310">
    <property type="term" value="P:DNA recombination"/>
    <property type="evidence" value="ECO:0007669"/>
    <property type="project" value="UniProtKB-KW"/>
</dbReference>
<dbReference type="GO" id="GO:0006508">
    <property type="term" value="P:proteolysis"/>
    <property type="evidence" value="ECO:0007669"/>
    <property type="project" value="UniProtKB-KW"/>
</dbReference>
<dbReference type="GO" id="GO:0032196">
    <property type="term" value="P:transposition"/>
    <property type="evidence" value="ECO:0007669"/>
    <property type="project" value="UniProtKB-KW"/>
</dbReference>
<dbReference type="GO" id="GO:0075523">
    <property type="term" value="P:viral translational frameshifting"/>
    <property type="evidence" value="ECO:0007669"/>
    <property type="project" value="UniProtKB-KW"/>
</dbReference>
<dbReference type="CDD" id="cd09272">
    <property type="entry name" value="RNase_HI_RT_Ty1"/>
    <property type="match status" value="1"/>
</dbReference>
<dbReference type="FunFam" id="3.30.420.10:FF:000050">
    <property type="entry name" value="Transposon Ty2-DR3 Gag-Pol polyprotein"/>
    <property type="match status" value="1"/>
</dbReference>
<dbReference type="Gene3D" id="3.30.420.10">
    <property type="entry name" value="Ribonuclease H-like superfamily/Ribonuclease H"/>
    <property type="match status" value="1"/>
</dbReference>
<dbReference type="InterPro" id="IPR001969">
    <property type="entry name" value="Aspartic_peptidase_AS"/>
</dbReference>
<dbReference type="InterPro" id="IPR043502">
    <property type="entry name" value="DNA/RNA_pol_sf"/>
</dbReference>
<dbReference type="InterPro" id="IPR001584">
    <property type="entry name" value="Integrase_cat-core"/>
</dbReference>
<dbReference type="InterPro" id="IPR039537">
    <property type="entry name" value="Retrotran_Ty1/copia-like"/>
</dbReference>
<dbReference type="InterPro" id="IPR012337">
    <property type="entry name" value="RNaseH-like_sf"/>
</dbReference>
<dbReference type="InterPro" id="IPR036397">
    <property type="entry name" value="RNaseH_sf"/>
</dbReference>
<dbReference type="InterPro" id="IPR013103">
    <property type="entry name" value="RVT_2"/>
</dbReference>
<dbReference type="InterPro" id="IPR015820">
    <property type="entry name" value="TYA"/>
</dbReference>
<dbReference type="PANTHER" id="PTHR42648">
    <property type="entry name" value="TRANSPOSASE, PUTATIVE-RELATED"/>
    <property type="match status" value="1"/>
</dbReference>
<dbReference type="PANTHER" id="PTHR42648:SF11">
    <property type="entry name" value="TRANSPOSON TY4-P GAG-POL POLYPROTEIN"/>
    <property type="match status" value="1"/>
</dbReference>
<dbReference type="Pfam" id="PF00665">
    <property type="entry name" value="rve"/>
    <property type="match status" value="1"/>
</dbReference>
<dbReference type="Pfam" id="PF07727">
    <property type="entry name" value="RVT_2"/>
    <property type="match status" value="1"/>
</dbReference>
<dbReference type="Pfam" id="PF01021">
    <property type="entry name" value="TYA"/>
    <property type="match status" value="1"/>
</dbReference>
<dbReference type="SUPFAM" id="SSF56672">
    <property type="entry name" value="DNA/RNA polymerases"/>
    <property type="match status" value="1"/>
</dbReference>
<dbReference type="SUPFAM" id="SSF53098">
    <property type="entry name" value="Ribonuclease H-like"/>
    <property type="match status" value="1"/>
</dbReference>
<dbReference type="PROSITE" id="PS00141">
    <property type="entry name" value="ASP_PROTEASE"/>
    <property type="match status" value="1"/>
</dbReference>
<dbReference type="PROSITE" id="PS50994">
    <property type="entry name" value="INTEGRASE"/>
    <property type="match status" value="1"/>
</dbReference>
<gene>
    <name type="primary">TY1B-LR2</name>
    <name type="synonym">YLRCTy1-2 POL</name>
    <name type="ordered locus">YLR157C-B</name>
    <name type="ORF">L9632.7</name>
</gene>
<evidence type="ECO:0000250" key="1"/>
<evidence type="ECO:0000250" key="2">
    <source>
        <dbReference type="UniProtKB" id="Q99231"/>
    </source>
</evidence>
<evidence type="ECO:0000255" key="3">
    <source>
        <dbReference type="PROSITE-ProRule" id="PRU00457"/>
    </source>
</evidence>
<evidence type="ECO:0000255" key="4">
    <source>
        <dbReference type="PROSITE-ProRule" id="PRU10094"/>
    </source>
</evidence>
<evidence type="ECO:0000256" key="5">
    <source>
        <dbReference type="SAM" id="MobiDB-lite"/>
    </source>
</evidence>
<keyword id="KW-0064">Aspartyl protease</keyword>
<keyword id="KW-0067">ATP-binding</keyword>
<keyword id="KW-0963">Cytoplasm</keyword>
<keyword id="KW-0229">DNA integration</keyword>
<keyword id="KW-0233">DNA recombination</keyword>
<keyword id="KW-0238">DNA-binding</keyword>
<keyword id="KW-0239">DNA-directed DNA polymerase</keyword>
<keyword id="KW-0255">Endonuclease</keyword>
<keyword id="KW-0378">Hydrolase</keyword>
<keyword id="KW-0460">Magnesium</keyword>
<keyword id="KW-0479">Metal-binding</keyword>
<keyword id="KW-0511">Multifunctional enzyme</keyword>
<keyword id="KW-0540">Nuclease</keyword>
<keyword id="KW-0547">Nucleotide-binding</keyword>
<keyword id="KW-0548">Nucleotidyltransferase</keyword>
<keyword id="KW-0539">Nucleus</keyword>
<keyword id="KW-0597">Phosphoprotein</keyword>
<keyword id="KW-0645">Protease</keyword>
<keyword id="KW-1185">Reference proteome</keyword>
<keyword id="KW-0688">Ribosomal frameshifting</keyword>
<keyword id="KW-0694">RNA-binding</keyword>
<keyword id="KW-0695">RNA-directed DNA polymerase</keyword>
<keyword id="KW-0808">Transferase</keyword>
<keyword id="KW-0814">Transposable element</keyword>
<keyword id="KW-0815">Transposition</keyword>
<keyword id="KW-1188">Viral release from host cell</keyword>
<keyword id="KW-0917">Virion maturation</keyword>
<keyword id="KW-0862">Zinc</keyword>
<keyword id="KW-0863">Zinc-finger</keyword>
<sequence>MESQQLSQHSPISHGSACASVTSKEVHTNQDPLDVSASKTEECEKASTKANSQQTTTPASSAVPENPHHASPQPASVPPPQNGPYPQQCMMTQNQANPSGWSFYGHPSMIPYTPYQMSPMYFPPGPQSQFPQYPSSVGTPLSTPSPESGNTFTDSSSADSDMTSTKKYVRPPPMLTSPNDFPNWVKTYIKFLQNSNLGGIIPTVNGKPVRQITDDELTFLYNTFQIFAPSQFLPTWVKDILSVDYTDIMKILSKSIEKMQSDTQEANDIVTLANLQYNGSTPADAFETKVTNIIDRLNNNGIHINNKVACQLIMRGLSGEYKFLRYTRHRHLNMTVAELFLDIHAIYEEQQGSRNSKPNYRRNLSDEKNDSRSYTNTTKPKVIARNPQKTNNSKSKTARAHNVSTSNNSPSTDNDSISKSTTEPIQLNNKHDLHLGQELTESTVNHTNHSDDELPGHLLLDSGASRTLIRSAHHIHSASSNPDINVVDAQKRNIPINAIGDLQFHFQDNTKTSIKVLHTPNIAYDLLSLNELAAVDITACFTKNVLERSDGTVLAPIVKYGDFYWVSKKYLLPSNISVPTINNVHTSESTRKYPYPFIHRMLAHANAPTIRYSLKNNTITYFNESDVDWSSAIDYQCPDCLIGKSTKHRHIKGSRLKYQNSYEPFQYLHTDIFGPVHNLPNSAPSYFISFTDETTKFRWVYPLHDRREDSILDVFTTILAFIKNQFQASVLVIQMDRGSEYTNRTLHKFLEKNGITPCYTTTADSRAHGVAERLNRTLLDDCRTQLQCSGLPNHLWFSAIEFSTIVRNSLASPKSKKSARQHAGLAGLDISTLLPFGQPVIVNDHNPNSKIHPRGIPGYALHPSRNSYGYIIYLPSLKKTVDTTNYVILQGKESRLDQFNYDALTFDEDLNRLTASYHSFIASNEIQESNDLNIESDHDFQSDIELHPEQPRNVLSKAVSPTDSTPPSTHTEDSKRVSKTNIRAPREVDPNISESNILPSKKRSSTPQISNIESTGSGGMHKLNVPLLAPMSQSNTHESSHASKSKDFRHSDSYSENETNHTNVPISSTGGTNNKTVPQISDQETEKRIIHRSPSIDASPPENNSSHNIVPIKTPTTVSEQNTEESIIADLPLPDLPPESPTEFPDPFKELPPINSRQTNSSLGGIGDSNAYTTINSKKRSLEDNETEIKVSRDTWNTKNMRSLEPPRSKKRIHLIAAVKAVKSIKPIRTTLRYDEAITYNKDIKEKEKYIEAYHKEVNQLLKMKTWDTDEYYDRKEIDPKRVINSMFIFNKKRDGTHKARFVARGDIQHPDTYDSGMQSNTVHHYALMTSLSLALDNNYYITQLDISSAYLYADIKEELYIRPPPHLGMNDKLIRLKKSLYGLKQSGANWYETIKSYLIKQCGMEEVRGWSCVFKNSQVTICLFVDDMILFSKDLNANKKIITTLKKQYDTKIINLGESDNEIQYDILGLEIKYQRGKYMKLGMENSLTEKIPKLNVPLNPKGRKLSAPGQPGLYIDQDELEIDEDEYKEKVHEMQKLIGLASYVGYKFRFDLLYYINTLAQHILFPSRQVLDMTYELIQFMWDTRDKQLIWHKNKPTEPDNKLVAISDASYGNQPYYKSQIGNIYLLNGKVIGGKSTKASLTCTSTTEAEIHAISESVPLLNNLSYLIQELNKKPIIKGLLTDSRSTISIIKSTNEEKFRNRFFGTKAMRLRDEVSGNNLYVYYIETKKNIADVMTKPLPIKTFKLLTNKWIH</sequence>
<proteinExistence type="inferred from homology"/>
<accession>P0C2I5</accession>
<accession>D6VYF8</accession>
<feature type="chain" id="PRO_0000279099" description="Transposon Ty1-LR2 Gag-Pol polyprotein">
    <location>
        <begin position="1"/>
        <end position="1755"/>
    </location>
</feature>
<feature type="chain" id="PRO_0000279100" description="Capsid protein" evidence="1">
    <location>
        <begin position="1"/>
        <end position="401"/>
    </location>
</feature>
<feature type="chain" id="PRO_0000279101" description="Ty1 protease" evidence="1">
    <location>
        <begin position="402"/>
        <end position="582"/>
    </location>
</feature>
<feature type="chain" id="PRO_0000279102" description="Integrase" evidence="1">
    <location>
        <begin position="583"/>
        <end position="1217"/>
    </location>
</feature>
<feature type="chain" id="PRO_0000279103" description="Reverse transcriptase/ribonuclease H" evidence="1">
    <location>
        <begin position="1218"/>
        <end position="1755"/>
    </location>
</feature>
<feature type="domain" description="Integrase catalytic" evidence="3">
    <location>
        <begin position="660"/>
        <end position="835"/>
    </location>
</feature>
<feature type="domain" description="Reverse transcriptase Ty1/copia-type">
    <location>
        <begin position="1338"/>
        <end position="1476"/>
    </location>
</feature>
<feature type="domain" description="RNase H Ty1/copia-type">
    <location>
        <begin position="1610"/>
        <end position="1752"/>
    </location>
</feature>
<feature type="region of interest" description="Disordered" evidence="5">
    <location>
        <begin position="1"/>
        <end position="93"/>
    </location>
</feature>
<feature type="region of interest" description="Disordered" evidence="5">
    <location>
        <begin position="126"/>
        <end position="174"/>
    </location>
</feature>
<feature type="region of interest" description="RNA-binding" evidence="1">
    <location>
        <begin position="299"/>
        <end position="401"/>
    </location>
</feature>
<feature type="region of interest" description="Disordered" evidence="5">
    <location>
        <begin position="352"/>
        <end position="421"/>
    </location>
</feature>
<feature type="region of interest" description="Integrase-type zinc finger-like">
    <location>
        <begin position="583"/>
        <end position="640"/>
    </location>
</feature>
<feature type="region of interest" description="Disordered" evidence="5">
    <location>
        <begin position="956"/>
        <end position="1087"/>
    </location>
</feature>
<feature type="region of interest" description="Disordered" evidence="5">
    <location>
        <begin position="1092"/>
        <end position="1111"/>
    </location>
</feature>
<feature type="region of interest" description="Disordered" evidence="5">
    <location>
        <begin position="1130"/>
        <end position="1187"/>
    </location>
</feature>
<feature type="short sequence motif" description="Bipartite nuclear localization signal" evidence="1">
    <location>
        <begin position="1178"/>
        <end position="1212"/>
    </location>
</feature>
<feature type="compositionally biased region" description="Polar residues" evidence="5">
    <location>
        <begin position="1"/>
        <end position="23"/>
    </location>
</feature>
<feature type="compositionally biased region" description="Polar residues" evidence="5">
    <location>
        <begin position="48"/>
        <end position="60"/>
    </location>
</feature>
<feature type="compositionally biased region" description="Polar residues" evidence="5">
    <location>
        <begin position="127"/>
        <end position="152"/>
    </location>
</feature>
<feature type="compositionally biased region" description="Low complexity" evidence="5">
    <location>
        <begin position="153"/>
        <end position="165"/>
    </location>
</feature>
<feature type="compositionally biased region" description="Low complexity" evidence="5">
    <location>
        <begin position="402"/>
        <end position="418"/>
    </location>
</feature>
<feature type="compositionally biased region" description="Low complexity" evidence="5">
    <location>
        <begin position="960"/>
        <end position="969"/>
    </location>
</feature>
<feature type="compositionally biased region" description="Polar residues" evidence="5">
    <location>
        <begin position="1005"/>
        <end position="1015"/>
    </location>
</feature>
<feature type="compositionally biased region" description="Basic and acidic residues" evidence="5">
    <location>
        <begin position="1038"/>
        <end position="1053"/>
    </location>
</feature>
<feature type="compositionally biased region" description="Polar residues" evidence="5">
    <location>
        <begin position="1054"/>
        <end position="1082"/>
    </location>
</feature>
<feature type="compositionally biased region" description="Polar residues" evidence="5">
    <location>
        <begin position="1101"/>
        <end position="1111"/>
    </location>
</feature>
<feature type="active site" description="For protease activity; shared with dimeric partner" evidence="4">
    <location>
        <position position="461"/>
    </location>
</feature>
<feature type="binding site" evidence="3">
    <location>
        <position position="671"/>
    </location>
    <ligand>
        <name>Mg(2+)</name>
        <dbReference type="ChEBI" id="CHEBI:18420"/>
        <label>1</label>
        <note>catalytic; for integrase activity</note>
    </ligand>
</feature>
<feature type="binding site" evidence="3">
    <location>
        <position position="736"/>
    </location>
    <ligand>
        <name>Mg(2+)</name>
        <dbReference type="ChEBI" id="CHEBI:18420"/>
        <label>1</label>
        <note>catalytic; for integrase activity</note>
    </ligand>
</feature>
<feature type="binding site" evidence="3">
    <location>
        <position position="1346"/>
    </location>
    <ligand>
        <name>Mg(2+)</name>
        <dbReference type="ChEBI" id="CHEBI:18420"/>
        <label>2</label>
        <note>catalytic; for reverse transcriptase activity</note>
    </ligand>
</feature>
<feature type="binding site" evidence="3">
    <location>
        <position position="1427"/>
    </location>
    <ligand>
        <name>Mg(2+)</name>
        <dbReference type="ChEBI" id="CHEBI:18420"/>
        <label>2</label>
        <note>catalytic; for reverse transcriptase activity</note>
    </ligand>
</feature>
<feature type="binding site" evidence="3">
    <location>
        <position position="1428"/>
    </location>
    <ligand>
        <name>Mg(2+)</name>
        <dbReference type="ChEBI" id="CHEBI:18420"/>
        <label>2</label>
        <note>catalytic; for reverse transcriptase activity</note>
    </ligand>
</feature>
<feature type="binding site" evidence="3">
    <location>
        <position position="1610"/>
    </location>
    <ligand>
        <name>Mg(2+)</name>
        <dbReference type="ChEBI" id="CHEBI:18420"/>
        <label>3</label>
        <note>catalytic; for RNase H activity</note>
    </ligand>
</feature>
<feature type="binding site" evidence="3">
    <location>
        <position position="1652"/>
    </location>
    <ligand>
        <name>Mg(2+)</name>
        <dbReference type="ChEBI" id="CHEBI:18420"/>
        <label>3</label>
        <note>catalytic; for RNase H activity</note>
    </ligand>
</feature>
<feature type="binding site" evidence="3">
    <location>
        <position position="1685"/>
    </location>
    <ligand>
        <name>Mg(2+)</name>
        <dbReference type="ChEBI" id="CHEBI:18420"/>
        <label>3</label>
        <note>catalytic; for RNase H activity</note>
    </ligand>
</feature>
<feature type="site" description="Cleavage; by Ty1 protease" evidence="1">
    <location>
        <begin position="401"/>
        <end position="402"/>
    </location>
</feature>
<feature type="site" description="Cleavage; by Ty1 protease" evidence="1">
    <location>
        <begin position="582"/>
        <end position="583"/>
    </location>
</feature>
<feature type="site" description="Cleavage; by Ty1 protease" evidence="1">
    <location>
        <begin position="1217"/>
        <end position="1218"/>
    </location>
</feature>
<feature type="modified residue" description="Phosphoserine" evidence="2">
    <location>
        <position position="416"/>
    </location>
</feature>